<name>RS10_THIDA</name>
<evidence type="ECO:0000255" key="1">
    <source>
        <dbReference type="HAMAP-Rule" id="MF_00508"/>
    </source>
</evidence>
<evidence type="ECO:0000305" key="2"/>
<reference key="1">
    <citation type="journal article" date="2006" name="J. Bacteriol.">
        <title>The genome sequence of the obligately chemolithoautotrophic, facultatively anaerobic bacterium Thiobacillus denitrificans.</title>
        <authorList>
            <person name="Beller H.R."/>
            <person name="Chain P.S."/>
            <person name="Letain T.E."/>
            <person name="Chakicherla A."/>
            <person name="Larimer F.W."/>
            <person name="Richardson P.M."/>
            <person name="Coleman M.A."/>
            <person name="Wood A.P."/>
            <person name="Kelly D.P."/>
        </authorList>
    </citation>
    <scope>NUCLEOTIDE SEQUENCE [LARGE SCALE GENOMIC DNA]</scope>
    <source>
        <strain>ATCC 25259 / T1</strain>
    </source>
</reference>
<protein>
    <recommendedName>
        <fullName evidence="1">Small ribosomal subunit protein uS10</fullName>
    </recommendedName>
    <alternativeName>
        <fullName evidence="2">30S ribosomal protein S10</fullName>
    </alternativeName>
</protein>
<feature type="chain" id="PRO_0000237113" description="Small ribosomal subunit protein uS10">
    <location>
        <begin position="1"/>
        <end position="102"/>
    </location>
</feature>
<accession>Q3SLQ0</accession>
<organism>
    <name type="scientific">Thiobacillus denitrificans (strain ATCC 25259 / T1)</name>
    <dbReference type="NCBI Taxonomy" id="292415"/>
    <lineage>
        <taxon>Bacteria</taxon>
        <taxon>Pseudomonadati</taxon>
        <taxon>Pseudomonadota</taxon>
        <taxon>Betaproteobacteria</taxon>
        <taxon>Nitrosomonadales</taxon>
        <taxon>Thiobacillaceae</taxon>
        <taxon>Thiobacillus</taxon>
    </lineage>
</organism>
<gene>
    <name evidence="1" type="primary">rpsJ</name>
    <name type="ordered locus">Tbd_0404</name>
</gene>
<comment type="function">
    <text evidence="1">Involved in the binding of tRNA to the ribosomes.</text>
</comment>
<comment type="subunit">
    <text evidence="1">Part of the 30S ribosomal subunit.</text>
</comment>
<comment type="similarity">
    <text evidence="1">Belongs to the universal ribosomal protein uS10 family.</text>
</comment>
<dbReference type="EMBL" id="CP000116">
    <property type="protein sequence ID" value="AAZ96357.1"/>
    <property type="molecule type" value="Genomic_DNA"/>
</dbReference>
<dbReference type="RefSeq" id="WP_011310916.1">
    <property type="nucleotide sequence ID" value="NC_007404.1"/>
</dbReference>
<dbReference type="SMR" id="Q3SLQ0"/>
<dbReference type="STRING" id="292415.Tbd_0404"/>
<dbReference type="KEGG" id="tbd:Tbd_0404"/>
<dbReference type="eggNOG" id="COG0051">
    <property type="taxonomic scope" value="Bacteria"/>
</dbReference>
<dbReference type="HOGENOM" id="CLU_122625_1_3_4"/>
<dbReference type="OrthoDB" id="9804464at2"/>
<dbReference type="Proteomes" id="UP000008291">
    <property type="component" value="Chromosome"/>
</dbReference>
<dbReference type="GO" id="GO:1990904">
    <property type="term" value="C:ribonucleoprotein complex"/>
    <property type="evidence" value="ECO:0007669"/>
    <property type="project" value="UniProtKB-KW"/>
</dbReference>
<dbReference type="GO" id="GO:0005840">
    <property type="term" value="C:ribosome"/>
    <property type="evidence" value="ECO:0007669"/>
    <property type="project" value="UniProtKB-KW"/>
</dbReference>
<dbReference type="GO" id="GO:0003735">
    <property type="term" value="F:structural constituent of ribosome"/>
    <property type="evidence" value="ECO:0007669"/>
    <property type="project" value="InterPro"/>
</dbReference>
<dbReference type="GO" id="GO:0000049">
    <property type="term" value="F:tRNA binding"/>
    <property type="evidence" value="ECO:0007669"/>
    <property type="project" value="UniProtKB-UniRule"/>
</dbReference>
<dbReference type="GO" id="GO:0006412">
    <property type="term" value="P:translation"/>
    <property type="evidence" value="ECO:0007669"/>
    <property type="project" value="UniProtKB-UniRule"/>
</dbReference>
<dbReference type="FunFam" id="3.30.70.600:FF:000001">
    <property type="entry name" value="30S ribosomal protein S10"/>
    <property type="match status" value="1"/>
</dbReference>
<dbReference type="Gene3D" id="3.30.70.600">
    <property type="entry name" value="Ribosomal protein S10 domain"/>
    <property type="match status" value="1"/>
</dbReference>
<dbReference type="HAMAP" id="MF_00508">
    <property type="entry name" value="Ribosomal_uS10"/>
    <property type="match status" value="1"/>
</dbReference>
<dbReference type="InterPro" id="IPR001848">
    <property type="entry name" value="Ribosomal_uS10"/>
</dbReference>
<dbReference type="InterPro" id="IPR018268">
    <property type="entry name" value="Ribosomal_uS10_CS"/>
</dbReference>
<dbReference type="InterPro" id="IPR027486">
    <property type="entry name" value="Ribosomal_uS10_dom"/>
</dbReference>
<dbReference type="InterPro" id="IPR036838">
    <property type="entry name" value="Ribosomal_uS10_dom_sf"/>
</dbReference>
<dbReference type="NCBIfam" id="NF001861">
    <property type="entry name" value="PRK00596.1"/>
    <property type="match status" value="1"/>
</dbReference>
<dbReference type="NCBIfam" id="TIGR01049">
    <property type="entry name" value="rpsJ_bact"/>
    <property type="match status" value="1"/>
</dbReference>
<dbReference type="PANTHER" id="PTHR11700">
    <property type="entry name" value="30S RIBOSOMAL PROTEIN S10 FAMILY MEMBER"/>
    <property type="match status" value="1"/>
</dbReference>
<dbReference type="Pfam" id="PF00338">
    <property type="entry name" value="Ribosomal_S10"/>
    <property type="match status" value="1"/>
</dbReference>
<dbReference type="PRINTS" id="PR00971">
    <property type="entry name" value="RIBOSOMALS10"/>
</dbReference>
<dbReference type="SMART" id="SM01403">
    <property type="entry name" value="Ribosomal_S10"/>
    <property type="match status" value="1"/>
</dbReference>
<dbReference type="SUPFAM" id="SSF54999">
    <property type="entry name" value="Ribosomal protein S10"/>
    <property type="match status" value="1"/>
</dbReference>
<dbReference type="PROSITE" id="PS00361">
    <property type="entry name" value="RIBOSOMAL_S10"/>
    <property type="match status" value="1"/>
</dbReference>
<proteinExistence type="inferred from homology"/>
<keyword id="KW-1185">Reference proteome</keyword>
<keyword id="KW-0687">Ribonucleoprotein</keyword>
<keyword id="KW-0689">Ribosomal protein</keyword>
<sequence length="102" mass="11670">MQNQKIRIRLKAFDYKLIDQSALEIVETAKRTGAVVKGPVPLPTSIERFDVLRSPHVNKSSRDQFEIRTHRRLMDIMDPTDKTVDALMKLDLPAGVDVEIKL</sequence>